<proteinExistence type="predicted"/>
<protein>
    <recommendedName>
        <fullName>trp operon leader peptide</fullName>
    </recommendedName>
</protein>
<dbReference type="EMBL" id="X17149">
    <property type="protein sequence ID" value="CAA35030.1"/>
    <property type="molecule type" value="Genomic_DNA"/>
</dbReference>
<dbReference type="EMBL" id="BA000031">
    <property type="protein sequence ID" value="BAC60218.1"/>
    <property type="molecule type" value="Genomic_DNA"/>
</dbReference>
<dbReference type="RefSeq" id="NP_798334.1">
    <property type="nucleotide sequence ID" value="NC_004603.1"/>
</dbReference>
<dbReference type="RefSeq" id="WP_005481655.1">
    <property type="nucleotide sequence ID" value="NC_004603.1"/>
</dbReference>
<dbReference type="GeneID" id="1189466"/>
<dbReference type="KEGG" id="vpa:VP1955"/>
<dbReference type="PATRIC" id="fig|223926.6.peg.1870"/>
<dbReference type="eggNOG" id="ENOG5031NZ8">
    <property type="taxonomic scope" value="Bacteria"/>
</dbReference>
<dbReference type="HOGENOM" id="CLU_3278658_0_0_6"/>
<dbReference type="Proteomes" id="UP000002493">
    <property type="component" value="Chromosome 1"/>
</dbReference>
<dbReference type="GO" id="GO:0000162">
    <property type="term" value="P:L-tryptophan biosynthetic process"/>
    <property type="evidence" value="ECO:0007669"/>
    <property type="project" value="UniProtKB-KW"/>
</dbReference>
<dbReference type="InterPro" id="IPR012639">
    <property type="entry name" value="Trp_leader2"/>
</dbReference>
<dbReference type="Pfam" id="PF08056">
    <property type="entry name" value="Trp_leader2"/>
    <property type="match status" value="1"/>
</dbReference>
<keyword id="KW-0028">Amino-acid biosynthesis</keyword>
<keyword id="KW-0057">Aromatic amino acid biosynthesis</keyword>
<keyword id="KW-0428">Leader peptide</keyword>
<keyword id="KW-0822">Tryptophan biosynthesis</keyword>
<organism>
    <name type="scientific">Vibrio parahaemolyticus serotype O3:K6 (strain RIMD 2210633)</name>
    <dbReference type="NCBI Taxonomy" id="223926"/>
    <lineage>
        <taxon>Bacteria</taxon>
        <taxon>Pseudomonadati</taxon>
        <taxon>Pseudomonadota</taxon>
        <taxon>Gammaproteobacteria</taxon>
        <taxon>Vibrionales</taxon>
        <taxon>Vibrionaceae</taxon>
        <taxon>Vibrio</taxon>
    </lineage>
</organism>
<evidence type="ECO:0000305" key="1"/>
<comment type="function">
    <text>This protein is involved in control of the biosynthesis of tryptophan.</text>
</comment>
<sequence length="41" mass="4968">MLQEFNQNQKAKVAVCLNKTNSTDLAWWRTWTSSWWANVYF</sequence>
<accession>P22100</accession>
<reference key="1">
    <citation type="journal article" date="1991" name="DNA Seq.">
        <title>Sequence and features of the tryptophan operon of Vibrio parahemolyticus.</title>
        <authorList>
            <person name="Crawford I.P."/>
            <person name="Han C.Y."/>
            <person name="Silverman M."/>
        </authorList>
    </citation>
    <scope>NUCLEOTIDE SEQUENCE [GENOMIC DNA]</scope>
    <source>
        <strain>BB22</strain>
    </source>
</reference>
<reference key="2">
    <citation type="journal article" date="2003" name="Lancet">
        <title>Genome sequence of Vibrio parahaemolyticus: a pathogenic mechanism distinct from that of V. cholerae.</title>
        <authorList>
            <person name="Makino K."/>
            <person name="Oshima K."/>
            <person name="Kurokawa K."/>
            <person name="Yokoyama K."/>
            <person name="Uda T."/>
            <person name="Tagomori K."/>
            <person name="Iijima Y."/>
            <person name="Najima M."/>
            <person name="Nakano M."/>
            <person name="Yamashita A."/>
            <person name="Kubota Y."/>
            <person name="Kimura S."/>
            <person name="Yasunaga T."/>
            <person name="Honda T."/>
            <person name="Shinagawa H."/>
            <person name="Hattori M."/>
            <person name="Iida T."/>
        </authorList>
    </citation>
    <scope>NUCLEOTIDE SEQUENCE [LARGE SCALE GENOMIC DNA]</scope>
    <source>
        <strain>RIMD 2210633</strain>
    </source>
</reference>
<gene>
    <name type="primary">trpL</name>
    <name type="ordered locus">VP1955</name>
</gene>
<name>LPW_VIBPA</name>
<feature type="chain" id="PRO_0000196525" description="trp operon leader peptide">
    <location>
        <begin position="1"/>
        <end position="41"/>
    </location>
</feature>
<feature type="sequence conflict" description="In Ref. 1; CAA35030." evidence="1" ref="1">
    <original>T</original>
    <variation>A</variation>
    <location>
        <position position="23"/>
    </location>
</feature>